<name>RSMA_ACTP2</name>
<gene>
    <name evidence="1" type="primary">rsmA</name>
    <name evidence="1" type="synonym">ksgA</name>
    <name type="ordered locus">APL_0399</name>
</gene>
<evidence type="ECO:0000255" key="1">
    <source>
        <dbReference type="HAMAP-Rule" id="MF_00607"/>
    </source>
</evidence>
<comment type="function">
    <text evidence="1">Specifically dimethylates two adjacent adenosines (A1518 and A1519) in the loop of a conserved hairpin near the 3'-end of 16S rRNA in the 30S particle. May play a critical role in biogenesis of 30S subunits.</text>
</comment>
<comment type="catalytic activity">
    <reaction evidence="1">
        <text>adenosine(1518)/adenosine(1519) in 16S rRNA + 4 S-adenosyl-L-methionine = N(6)-dimethyladenosine(1518)/N(6)-dimethyladenosine(1519) in 16S rRNA + 4 S-adenosyl-L-homocysteine + 4 H(+)</text>
        <dbReference type="Rhea" id="RHEA:19609"/>
        <dbReference type="Rhea" id="RHEA-COMP:10232"/>
        <dbReference type="Rhea" id="RHEA-COMP:10233"/>
        <dbReference type="ChEBI" id="CHEBI:15378"/>
        <dbReference type="ChEBI" id="CHEBI:57856"/>
        <dbReference type="ChEBI" id="CHEBI:59789"/>
        <dbReference type="ChEBI" id="CHEBI:74411"/>
        <dbReference type="ChEBI" id="CHEBI:74493"/>
        <dbReference type="EC" id="2.1.1.182"/>
    </reaction>
</comment>
<comment type="subcellular location">
    <subcellularLocation>
        <location evidence="1">Cytoplasm</location>
    </subcellularLocation>
</comment>
<comment type="similarity">
    <text evidence="1">Belongs to the class I-like SAM-binding methyltransferase superfamily. rRNA adenine N(6)-methyltransferase family. RsmA subfamily.</text>
</comment>
<dbReference type="EC" id="2.1.1.182" evidence="1"/>
<dbReference type="EMBL" id="CP000569">
    <property type="protein sequence ID" value="ABN73503.1"/>
    <property type="molecule type" value="Genomic_DNA"/>
</dbReference>
<dbReference type="RefSeq" id="WP_005596422.1">
    <property type="nucleotide sequence ID" value="NC_009053.1"/>
</dbReference>
<dbReference type="SMR" id="A3MZB7"/>
<dbReference type="STRING" id="416269.APL_0399"/>
<dbReference type="EnsemblBacteria" id="ABN73503">
    <property type="protein sequence ID" value="ABN73503"/>
    <property type="gene ID" value="APL_0399"/>
</dbReference>
<dbReference type="GeneID" id="48598565"/>
<dbReference type="KEGG" id="apl:APL_0399"/>
<dbReference type="eggNOG" id="COG0030">
    <property type="taxonomic scope" value="Bacteria"/>
</dbReference>
<dbReference type="HOGENOM" id="CLU_041220_0_1_6"/>
<dbReference type="Proteomes" id="UP000001432">
    <property type="component" value="Chromosome"/>
</dbReference>
<dbReference type="GO" id="GO:0005829">
    <property type="term" value="C:cytosol"/>
    <property type="evidence" value="ECO:0007669"/>
    <property type="project" value="TreeGrafter"/>
</dbReference>
<dbReference type="GO" id="GO:0052908">
    <property type="term" value="F:16S rRNA (adenine(1518)-N(6)/adenine(1519)-N(6))-dimethyltransferase activity"/>
    <property type="evidence" value="ECO:0007669"/>
    <property type="project" value="UniProtKB-EC"/>
</dbReference>
<dbReference type="GO" id="GO:0003723">
    <property type="term" value="F:RNA binding"/>
    <property type="evidence" value="ECO:0007669"/>
    <property type="project" value="UniProtKB-KW"/>
</dbReference>
<dbReference type="CDD" id="cd02440">
    <property type="entry name" value="AdoMet_MTases"/>
    <property type="match status" value="1"/>
</dbReference>
<dbReference type="FunFam" id="1.10.8.100:FF:000001">
    <property type="entry name" value="Ribosomal RNA small subunit methyltransferase A"/>
    <property type="match status" value="1"/>
</dbReference>
<dbReference type="FunFam" id="3.40.50.150:FF:000006">
    <property type="entry name" value="Ribosomal RNA small subunit methyltransferase A"/>
    <property type="match status" value="1"/>
</dbReference>
<dbReference type="Gene3D" id="1.10.8.100">
    <property type="entry name" value="Ribosomal RNA adenine dimethylase-like, domain 2"/>
    <property type="match status" value="1"/>
</dbReference>
<dbReference type="Gene3D" id="3.40.50.150">
    <property type="entry name" value="Vaccinia Virus protein VP39"/>
    <property type="match status" value="1"/>
</dbReference>
<dbReference type="HAMAP" id="MF_00607">
    <property type="entry name" value="16SrRNA_methyltr_A"/>
    <property type="match status" value="1"/>
</dbReference>
<dbReference type="InterPro" id="IPR001737">
    <property type="entry name" value="KsgA/Erm"/>
</dbReference>
<dbReference type="InterPro" id="IPR023165">
    <property type="entry name" value="rRNA_Ade_diMease-like_C"/>
</dbReference>
<dbReference type="InterPro" id="IPR020596">
    <property type="entry name" value="rRNA_Ade_Mease_Trfase_CS"/>
</dbReference>
<dbReference type="InterPro" id="IPR020598">
    <property type="entry name" value="rRNA_Ade_methylase_Trfase_N"/>
</dbReference>
<dbReference type="InterPro" id="IPR011530">
    <property type="entry name" value="rRNA_adenine_dimethylase"/>
</dbReference>
<dbReference type="InterPro" id="IPR029063">
    <property type="entry name" value="SAM-dependent_MTases_sf"/>
</dbReference>
<dbReference type="NCBIfam" id="TIGR00755">
    <property type="entry name" value="ksgA"/>
    <property type="match status" value="1"/>
</dbReference>
<dbReference type="PANTHER" id="PTHR11727">
    <property type="entry name" value="DIMETHYLADENOSINE TRANSFERASE"/>
    <property type="match status" value="1"/>
</dbReference>
<dbReference type="PANTHER" id="PTHR11727:SF7">
    <property type="entry name" value="DIMETHYLADENOSINE TRANSFERASE-RELATED"/>
    <property type="match status" value="1"/>
</dbReference>
<dbReference type="Pfam" id="PF00398">
    <property type="entry name" value="RrnaAD"/>
    <property type="match status" value="1"/>
</dbReference>
<dbReference type="SMART" id="SM00650">
    <property type="entry name" value="rADc"/>
    <property type="match status" value="1"/>
</dbReference>
<dbReference type="SUPFAM" id="SSF53335">
    <property type="entry name" value="S-adenosyl-L-methionine-dependent methyltransferases"/>
    <property type="match status" value="1"/>
</dbReference>
<dbReference type="PROSITE" id="PS01131">
    <property type="entry name" value="RRNA_A_DIMETH"/>
    <property type="match status" value="1"/>
</dbReference>
<dbReference type="PROSITE" id="PS51689">
    <property type="entry name" value="SAM_RNA_A_N6_MT"/>
    <property type="match status" value="1"/>
</dbReference>
<accession>A3MZB7</accession>
<sequence length="289" mass="33272">MSNQNSKKHLGHTARKRFGQNFLHDMNVIHNIVSAINPKNGQFLLEIGPGLGALTEPVAEQVDKLTVVELDRDLAERLRHHPFLNHKLTIIEQDALRFNFREYFESLELREGEGVRVFGNLPYNISTPLMFHLFKFHDLIQDMHFMLQKEVVKRLCAAPNSKAYGRLTIMAQYYCQVMPVLEVPPTAFKPAPKVDSAVVRLMPHKVLPHPVKDVYWLNRVTTQAFNQRRKTLRNALSTLFSPEQLEALNIDLNARAENLSIADYARLANWLYDNPPAVDNQEEIIDEDI</sequence>
<proteinExistence type="inferred from homology"/>
<keyword id="KW-0963">Cytoplasm</keyword>
<keyword id="KW-0489">Methyltransferase</keyword>
<keyword id="KW-1185">Reference proteome</keyword>
<keyword id="KW-0694">RNA-binding</keyword>
<keyword id="KW-0698">rRNA processing</keyword>
<keyword id="KW-0949">S-adenosyl-L-methionine</keyword>
<keyword id="KW-0808">Transferase</keyword>
<protein>
    <recommendedName>
        <fullName evidence="1">Ribosomal RNA small subunit methyltransferase A</fullName>
        <ecNumber evidence="1">2.1.1.182</ecNumber>
    </recommendedName>
    <alternativeName>
        <fullName evidence="1">16S rRNA (adenine(1518)-N(6)/adenine(1519)-N(6))-dimethyltransferase</fullName>
    </alternativeName>
    <alternativeName>
        <fullName evidence="1">16S rRNA dimethyladenosine transferase</fullName>
    </alternativeName>
    <alternativeName>
        <fullName evidence="1">16S rRNA dimethylase</fullName>
    </alternativeName>
    <alternativeName>
        <fullName evidence="1">S-adenosylmethionine-6-N', N'-adenosyl(rRNA) dimethyltransferase</fullName>
    </alternativeName>
</protein>
<feature type="chain" id="PRO_1000056591" description="Ribosomal RNA small subunit methyltransferase A">
    <location>
        <begin position="1"/>
        <end position="289"/>
    </location>
</feature>
<feature type="binding site" evidence="1">
    <location>
        <position position="21"/>
    </location>
    <ligand>
        <name>S-adenosyl-L-methionine</name>
        <dbReference type="ChEBI" id="CHEBI:59789"/>
    </ligand>
</feature>
<feature type="binding site" evidence="1">
    <location>
        <position position="23"/>
    </location>
    <ligand>
        <name>S-adenosyl-L-methionine</name>
        <dbReference type="ChEBI" id="CHEBI:59789"/>
    </ligand>
</feature>
<feature type="binding site" evidence="1">
    <location>
        <position position="48"/>
    </location>
    <ligand>
        <name>S-adenosyl-L-methionine</name>
        <dbReference type="ChEBI" id="CHEBI:59789"/>
    </ligand>
</feature>
<feature type="binding site" evidence="1">
    <location>
        <position position="69"/>
    </location>
    <ligand>
        <name>S-adenosyl-L-methionine</name>
        <dbReference type="ChEBI" id="CHEBI:59789"/>
    </ligand>
</feature>
<feature type="binding site" evidence="1">
    <location>
        <position position="94"/>
    </location>
    <ligand>
        <name>S-adenosyl-L-methionine</name>
        <dbReference type="ChEBI" id="CHEBI:59789"/>
    </ligand>
</feature>
<feature type="binding site" evidence="1">
    <location>
        <position position="120"/>
    </location>
    <ligand>
        <name>S-adenosyl-L-methionine</name>
        <dbReference type="ChEBI" id="CHEBI:59789"/>
    </ligand>
</feature>
<organism>
    <name type="scientific">Actinobacillus pleuropneumoniae serotype 5b (strain L20)</name>
    <dbReference type="NCBI Taxonomy" id="416269"/>
    <lineage>
        <taxon>Bacteria</taxon>
        <taxon>Pseudomonadati</taxon>
        <taxon>Pseudomonadota</taxon>
        <taxon>Gammaproteobacteria</taxon>
        <taxon>Pasteurellales</taxon>
        <taxon>Pasteurellaceae</taxon>
        <taxon>Actinobacillus</taxon>
    </lineage>
</organism>
<reference key="1">
    <citation type="journal article" date="2008" name="J. Bacteriol.">
        <title>The complete genome sequence of Actinobacillus pleuropneumoniae L20 (serotype 5b).</title>
        <authorList>
            <person name="Foote S.J."/>
            <person name="Bosse J.T."/>
            <person name="Bouevitch A.B."/>
            <person name="Langford P.R."/>
            <person name="Young N.M."/>
            <person name="Nash J.H.E."/>
        </authorList>
    </citation>
    <scope>NUCLEOTIDE SEQUENCE [LARGE SCALE GENOMIC DNA]</scope>
    <source>
        <strain>L20</strain>
    </source>
</reference>